<feature type="chain" id="PRO_0000220729" description="Uncharacterized protein BH0260">
    <location>
        <begin position="1"/>
        <end position="36"/>
    </location>
</feature>
<accession>Q9KG53</accession>
<name>Y260_HALH5</name>
<reference key="1">
    <citation type="journal article" date="2000" name="Nucleic Acids Res.">
        <title>Complete genome sequence of the alkaliphilic bacterium Bacillus halodurans and genomic sequence comparison with Bacillus subtilis.</title>
        <authorList>
            <person name="Takami H."/>
            <person name="Nakasone K."/>
            <person name="Takaki Y."/>
            <person name="Maeno G."/>
            <person name="Sasaki R."/>
            <person name="Masui N."/>
            <person name="Fuji F."/>
            <person name="Hirama C."/>
            <person name="Nakamura Y."/>
            <person name="Ogasawara N."/>
            <person name="Kuhara S."/>
            <person name="Horikoshi K."/>
        </authorList>
    </citation>
    <scope>NUCLEOTIDE SEQUENCE [LARGE SCALE GENOMIC DNA]</scope>
    <source>
        <strain>ATCC BAA-125 / DSM 18197 / FERM 7344 / JCM 9153 / C-125</strain>
    </source>
</reference>
<keyword id="KW-1185">Reference proteome</keyword>
<proteinExistence type="predicted"/>
<protein>
    <recommendedName>
        <fullName>Uncharacterized protein BH0260</fullName>
    </recommendedName>
</protein>
<dbReference type="EMBL" id="BA000004">
    <property type="protein sequence ID" value="BAB03979.1"/>
    <property type="molecule type" value="Genomic_DNA"/>
</dbReference>
<dbReference type="PIR" id="D83682">
    <property type="entry name" value="D83682"/>
</dbReference>
<dbReference type="STRING" id="272558.gene:10726105"/>
<dbReference type="KEGG" id="bha:BH0260"/>
<dbReference type="HOGENOM" id="CLU_3354491_0_0_9"/>
<dbReference type="Proteomes" id="UP000001258">
    <property type="component" value="Chromosome"/>
</dbReference>
<organism>
    <name type="scientific">Halalkalibacterium halodurans (strain ATCC BAA-125 / DSM 18197 / FERM 7344 / JCM 9153 / C-125)</name>
    <name type="common">Bacillus halodurans</name>
    <dbReference type="NCBI Taxonomy" id="272558"/>
    <lineage>
        <taxon>Bacteria</taxon>
        <taxon>Bacillati</taxon>
        <taxon>Bacillota</taxon>
        <taxon>Bacilli</taxon>
        <taxon>Bacillales</taxon>
        <taxon>Bacillaceae</taxon>
        <taxon>Halalkalibacterium (ex Joshi et al. 2022)</taxon>
    </lineage>
</organism>
<sequence length="36" mass="4307">MKILVNESWEQQRKKIQQLLSDEKTGKESMVSVKWT</sequence>
<gene>
    <name type="ordered locus">BH0260</name>
</gene>